<comment type="function">
    <text evidence="3 7 8 9 10 11 12 14">Acts as a regulator of cell proliferation and elongation in the root and shoot (PubMed:25049386, PubMed:28652362). Regulates roots architecture and primary root protophloem differentiation (PubMed:25049386, PubMed:28652362). BRX, BAM3, and CLE45 act together to regulate the transition of protophloem cells from proliferation to differentiation, thus impinging on postembryonic growth capacity of the root meristem (PubMed:23569225). Probable transcription regulator. Regulated by the auxin response factor ARF5. Polarly localized in vascular cells and subject to endocytic recycling. Required for CPD expression and for correct nuclear auxin response. Mediates cross-talk between the auxin and brassinosteroid pathways. BRX is a target for auxin-induced, proteasome-mediated degradation.</text>
</comment>
<comment type="subunit">
    <text evidence="4 8 10">Homodimer and heterodimer with BRXL1. Interacts with NGA1 and ARF5.</text>
</comment>
<comment type="interaction">
    <interactant intactId="EBI-4426649">
        <id>Q17TI5</id>
    </interactant>
    <interactant intactId="EBI-1778843">
        <id>Q9S7Z2</id>
        <label>AFP4</label>
    </interactant>
    <organismsDiffer>false</organismsDiffer>
    <experiments>3</experiments>
</comment>
<comment type="interaction">
    <interactant intactId="EBI-4426649">
        <id>Q17TI5</id>
    </interactant>
    <interactant intactId="EBI-2363348">
        <id>Q9FLI3</id>
        <label>AHG1</label>
    </interactant>
    <organismsDiffer>false</organismsDiffer>
    <experiments>3</experiments>
</comment>
<comment type="interaction">
    <interactant intactId="EBI-4426649">
        <id>Q17TI5</id>
    </interactant>
    <interactant intactId="EBI-4428689">
        <id>Q8LPN5</id>
        <label>AHL12</label>
    </interactant>
    <organismsDiffer>false</organismsDiffer>
    <experiments>3</experiments>
</comment>
<comment type="interaction">
    <interactant intactId="EBI-4426649">
        <id>Q17TI5</id>
    </interactant>
    <interactant intactId="EBI-618423">
        <id>Q9LKL2</id>
        <label>APRR1</label>
    </interactant>
    <organismsDiffer>false</organismsDiffer>
    <experiments>3</experiments>
</comment>
<comment type="interaction">
    <interactant intactId="EBI-4426649">
        <id>Q17TI5</id>
    </interactant>
    <interactant intactId="EBI-1100737">
        <id>Q8L9Y3</id>
        <label>ARR14</label>
    </interactant>
    <organismsDiffer>false</organismsDiffer>
    <experiments>3</experiments>
</comment>
<comment type="interaction">
    <interactant intactId="EBI-4426649">
        <id>Q17TI5</id>
    </interactant>
    <interactant intactId="EBI-4457339">
        <id>Q949T8</id>
        <label>ASHR3</label>
    </interactant>
    <organismsDiffer>false</organismsDiffer>
    <experiments>3</experiments>
</comment>
<comment type="interaction">
    <interactant intactId="EBI-4426649">
        <id>Q17TI5</id>
    </interactant>
    <interactant intactId="EBI-25518871">
        <id>A0A384LJI7</id>
        <label>At1g01210</label>
    </interactant>
    <organismsDiffer>false</organismsDiffer>
    <experiments>3</experiments>
</comment>
<comment type="interaction">
    <interactant intactId="EBI-4426649">
        <id>Q17TI5</id>
    </interactant>
    <interactant intactId="EBI-4440643">
        <id>Q681Q7</id>
        <label>At1g03900</label>
    </interactant>
    <organismsDiffer>false</organismsDiffer>
    <experiments>4</experiments>
</comment>
<comment type="interaction">
    <interactant intactId="EBI-4426649">
        <id>Q17TI5</id>
    </interactant>
    <interactant intactId="EBI-25518624">
        <id>Q9FWW2</id>
        <label>At1g12120</label>
    </interactant>
    <organismsDiffer>false</organismsDiffer>
    <experiments>3</experiments>
</comment>
<comment type="interaction">
    <interactant intactId="EBI-4426649">
        <id>Q17TI5</id>
    </interactant>
    <interactant intactId="EBI-25516987">
        <id>Q9SLL2</id>
        <label>At1g54200</label>
    </interactant>
    <organismsDiffer>false</organismsDiffer>
    <experiments>3</experiments>
</comment>
<comment type="interaction">
    <interactant intactId="EBI-4426649">
        <id>Q17TI5</id>
    </interactant>
    <interactant intactId="EBI-25519221">
        <id>Q9SGS5</id>
        <label>At1g76070</label>
    </interactant>
    <organismsDiffer>false</organismsDiffer>
    <experiments>3</experiments>
</comment>
<comment type="interaction">
    <interactant intactId="EBI-4426649">
        <id>Q17TI5</id>
    </interactant>
    <interactant intactId="EBI-25519089">
        <id>O64764</id>
        <label>At2g35010</label>
    </interactant>
    <organismsDiffer>false</organismsDiffer>
    <experiments>3</experiments>
</comment>
<comment type="interaction">
    <interactant intactId="EBI-4426649">
        <id>Q17TI5</id>
    </interactant>
    <interactant intactId="EBI-25519200">
        <id>Q9LUS8</id>
        <label>At3g16560</label>
    </interactant>
    <organismsDiffer>false</organismsDiffer>
    <experiments>3</experiments>
</comment>
<comment type="interaction">
    <interactant intactId="EBI-4426649">
        <id>Q17TI5</id>
    </interactant>
    <interactant intactId="EBI-21457081">
        <id>Q9LS61</id>
        <label>At3g18295</label>
    </interactant>
    <organismsDiffer>false</organismsDiffer>
    <experiments>3</experiments>
</comment>
<comment type="interaction">
    <interactant intactId="EBI-4426649">
        <id>Q17TI5</id>
    </interactant>
    <interactant intactId="EBI-25517043">
        <id>A0A384KYS8</id>
        <label>At3g48510</label>
    </interactant>
    <organismsDiffer>false</organismsDiffer>
    <experiments>3</experiments>
</comment>
<comment type="interaction">
    <interactant intactId="EBI-4426649">
        <id>Q17TI5</id>
    </interactant>
    <interactant intactId="EBI-15192535">
        <id>F4JI72</id>
        <label>At4g03250</label>
    </interactant>
    <organismsDiffer>false</organismsDiffer>
    <experiments>3</experiments>
</comment>
<comment type="interaction">
    <interactant intactId="EBI-4426649">
        <id>Q17TI5</id>
    </interactant>
    <interactant intactId="EBI-25519178">
        <id>A0A1P8B4Y6</id>
        <label>At4g21660</label>
    </interactant>
    <organismsDiffer>false</organismsDiffer>
    <experiments>3</experiments>
</comment>
<comment type="interaction">
    <interactant intactId="EBI-4426649">
        <id>Q17TI5</id>
    </interactant>
    <interactant intactId="EBI-25516100">
        <id>Q9XFH9</id>
        <label>At5g16400</label>
    </interactant>
    <organismsDiffer>false</organismsDiffer>
    <experiments>3</experiments>
</comment>
<comment type="interaction">
    <interactant intactId="EBI-4426649">
        <id>Q17TI5</id>
    </interactant>
    <interactant intactId="EBI-25518939">
        <id>Q6NM33</id>
        <label>At5g19340</label>
    </interactant>
    <organismsDiffer>false</organismsDiffer>
    <experiments>3</experiments>
</comment>
<comment type="interaction">
    <interactant intactId="EBI-4426649">
        <id>Q17TI5</id>
    </interactant>
    <interactant intactId="EBI-25519119">
        <id>A0A178WMH3</id>
        <label>AXX17_At1g24430</label>
    </interactant>
    <organismsDiffer>false</organismsDiffer>
    <experiments>3</experiments>
</comment>
<comment type="interaction">
    <interactant intactId="EBI-4426649">
        <id>Q17TI5</id>
    </interactant>
    <interactant intactId="EBI-25515760">
        <id>A0A178W725</id>
        <label>AXX17_At1g45300</label>
    </interactant>
    <organismsDiffer>false</organismsDiffer>
    <experiments>3</experiments>
</comment>
<comment type="interaction">
    <interactant intactId="EBI-4426649">
        <id>Q17TI5</id>
    </interactant>
    <interactant intactId="EBI-25518767">
        <id>A0A178UKR9</id>
        <label>AXX17_At5g49040</label>
    </interactant>
    <organismsDiffer>false</organismsDiffer>
    <experiments>3</experiments>
</comment>
<comment type="interaction">
    <interactant intactId="EBI-4426649">
        <id>Q17TI5</id>
    </interactant>
    <interactant intactId="EBI-4427748">
        <id>Q7XJU2</id>
        <label>BHLH153</label>
    </interactant>
    <organismsDiffer>false</organismsDiffer>
    <experiments>5</experiments>
</comment>
<comment type="interaction">
    <interactant intactId="EBI-4426649">
        <id>Q17TI5</id>
    </interactant>
    <interactant intactId="EBI-617095">
        <id>Q9LEZ3</id>
        <label>BIM1</label>
    </interactant>
    <organismsDiffer>false</organismsDiffer>
    <experiments>5</experiments>
</comment>
<comment type="interaction">
    <interactant intactId="EBI-4426649">
        <id>Q17TI5</id>
    </interactant>
    <interactant intactId="EBI-15215888">
        <id>Q9LDE2</id>
        <label>BPC2</label>
    </interactant>
    <organismsDiffer>false</organismsDiffer>
    <experiments>3</experiments>
</comment>
<comment type="interaction">
    <interactant intactId="EBI-4426649">
        <id>Q17TI5</id>
    </interactant>
    <interactant intactId="EBI-25517863">
        <id>Q9SGS4</id>
        <label>CDSP32</label>
    </interactant>
    <organismsDiffer>false</organismsDiffer>
    <experiments>3</experiments>
</comment>
<comment type="interaction">
    <interactant intactId="EBI-4426649">
        <id>Q17TI5</id>
    </interactant>
    <interactant intactId="EBI-1573415">
        <id>Q9SEZ7</id>
        <label>CIPK16</label>
    </interactant>
    <organismsDiffer>false</organismsDiffer>
    <experiments>3</experiments>
</comment>
<comment type="interaction">
    <interactant intactId="EBI-4426649">
        <id>Q17TI5</id>
    </interactant>
    <interactant intactId="EBI-1765282">
        <id>Q9MAM1</id>
        <label>CIPK9</label>
    </interactant>
    <organismsDiffer>false</organismsDiffer>
    <experiments>4</experiments>
</comment>
<comment type="interaction">
    <interactant intactId="EBI-4426649">
        <id>Q17TI5</id>
    </interactant>
    <interactant intactId="EBI-4456165">
        <id>Q9LFR7</id>
        <label>CXE17</label>
    </interactant>
    <organismsDiffer>false</organismsDiffer>
    <experiments>5</experiments>
</comment>
<comment type="interaction">
    <interactant intactId="EBI-4426649">
        <id>Q17TI5</id>
    </interactant>
    <interactant intactId="EBI-1103570">
        <id>Q9FG74</id>
        <label>D6PK</label>
    </interactant>
    <organismsDiffer>false</organismsDiffer>
    <experiments>3</experiments>
</comment>
<comment type="interaction">
    <interactant intactId="EBI-4426649">
        <id>Q17TI5</id>
    </interactant>
    <interactant intactId="EBI-1103605">
        <id>Q9SUA3</id>
        <label>D6PKL1</label>
    </interactant>
    <organismsDiffer>false</organismsDiffer>
    <experiments>3</experiments>
</comment>
<comment type="interaction">
    <interactant intactId="EBI-4426649">
        <id>Q17TI5</id>
    </interactant>
    <interactant intactId="EBI-1103648">
        <id>Q05999</id>
        <label>D6PKL3</label>
    </interactant>
    <organismsDiffer>false</organismsDiffer>
    <experiments>4</experiments>
</comment>
<comment type="interaction">
    <interactant intactId="EBI-4426649">
        <id>Q17TI5</id>
    </interactant>
    <interactant intactId="EBI-25519155">
        <id>O23263</id>
        <label>dl3050c</label>
    </interactant>
    <organismsDiffer>false</organismsDiffer>
    <experiments>3</experiments>
</comment>
<comment type="interaction">
    <interactant intactId="EBI-4426649">
        <id>Q17TI5</id>
    </interactant>
    <interactant intactId="EBI-632672">
        <id>Q8GY79</id>
        <label>DRB5</label>
    </interactant>
    <organismsDiffer>false</organismsDiffer>
    <experiments>3</experiments>
</comment>
<comment type="interaction">
    <interactant intactId="EBI-4426649">
        <id>Q17TI5</id>
    </interactant>
    <interactant intactId="EBI-4424266">
        <id>Q84MD6</id>
        <label>DSP2</label>
    </interactant>
    <organismsDiffer>false</organismsDiffer>
    <experiments>6</experiments>
</comment>
<comment type="interaction">
    <interactant intactId="EBI-4426649">
        <id>Q17TI5</id>
    </interactant>
    <interactant intactId="EBI-25516971">
        <id>Q56XH8</id>
        <label>ECT11</label>
    </interactant>
    <organismsDiffer>false</organismsDiffer>
    <experiments>3</experiments>
</comment>
<comment type="interaction">
    <interactant intactId="EBI-4426649">
        <id>Q17TI5</id>
    </interactant>
    <interactant intactId="EBI-1544548">
        <id>Q9FHK4</id>
        <label>EDR4</label>
    </interactant>
    <organismsDiffer>false</organismsDiffer>
    <experiments>3</experiments>
</comment>
<comment type="interaction">
    <interactant intactId="EBI-4426649">
        <id>Q17TI5</id>
    </interactant>
    <interactant intactId="EBI-25518734">
        <id>F4J6A1</id>
        <label>EIF3G1</label>
    </interactant>
    <organismsDiffer>false</organismsDiffer>
    <experiments>3</experiments>
</comment>
<comment type="interaction">
    <interactant intactId="EBI-4426649">
        <id>Q17TI5</id>
    </interactant>
    <interactant intactId="EBI-2000137">
        <id>Q9MAI5</id>
        <label>ERF8</label>
    </interactant>
    <organismsDiffer>false</organismsDiffer>
    <experiments>3</experiments>
</comment>
<comment type="interaction">
    <interactant intactId="EBI-4426649">
        <id>Q17TI5</id>
    </interactant>
    <interactant intactId="EBI-1641243">
        <id>Q9ZSZ8</id>
        <label>FIP37</label>
    </interactant>
    <organismsDiffer>false</organismsDiffer>
    <experiments>4</experiments>
</comment>
<comment type="interaction">
    <interactant intactId="EBI-4426649">
        <id>Q17TI5</id>
    </interactant>
    <interactant intactId="EBI-25519036">
        <id>Q9LYE4</id>
        <label>FLZ10</label>
    </interactant>
    <organismsDiffer>false</organismsDiffer>
    <experiments>3</experiments>
</comment>
<comment type="interaction">
    <interactant intactId="EBI-4426649">
        <id>Q17TI5</id>
    </interactant>
    <interactant intactId="EBI-4426378">
        <id>Q39103</id>
        <label>GA3OX1</label>
    </interactant>
    <organismsDiffer>false</organismsDiffer>
    <experiments>5</experiments>
</comment>
<comment type="interaction">
    <interactant intactId="EBI-4426649">
        <id>Q17TI5</id>
    </interactant>
    <interactant intactId="EBI-25519238">
        <id>F4KGE8</id>
        <label>GIL1</label>
    </interactant>
    <organismsDiffer>false</organismsDiffer>
    <experiments>3</experiments>
</comment>
<comment type="interaction">
    <interactant intactId="EBI-4426649">
        <id>Q17TI5</id>
    </interactant>
    <interactant intactId="EBI-4427398">
        <id>Q8LBK6</id>
        <label>GRXS15</label>
    </interactant>
    <organismsDiffer>false</organismsDiffer>
    <experiments>3</experiments>
</comment>
<comment type="interaction">
    <interactant intactId="EBI-4426649">
        <id>Q17TI5</id>
    </interactant>
    <interactant intactId="EBI-2355356">
        <id>Q9SAC6</id>
        <label>GWD1</label>
    </interactant>
    <organismsDiffer>false</organismsDiffer>
    <experiments>3</experiments>
</comment>
<comment type="interaction">
    <interactant intactId="EBI-4426649">
        <id>Q17TI5</id>
    </interactant>
    <interactant intactId="EBI-3387398">
        <id>Q9LZR5</id>
        <label>HDT3</label>
    </interactant>
    <organismsDiffer>false</organismsDiffer>
    <experiments>3</experiments>
</comment>
<comment type="interaction">
    <interactant intactId="EBI-4426649">
        <id>Q17TI5</id>
    </interactant>
    <interactant intactId="EBI-25518903">
        <id>Q9M4T3</id>
        <label>HDT4</label>
    </interactant>
    <organismsDiffer>false</organismsDiffer>
    <experiments>3</experiments>
</comment>
<comment type="interaction">
    <interactant intactId="EBI-4426649">
        <id>Q17TI5</id>
    </interactant>
    <interactant intactId="EBI-15191579">
        <id>Q9C9X7</id>
        <label>IDD14</label>
    </interactant>
    <organismsDiffer>false</organismsDiffer>
    <experiments>3</experiments>
</comment>
<comment type="interaction">
    <interactant intactId="EBI-4426649">
        <id>Q17TI5</id>
    </interactant>
    <interactant intactId="EBI-25519006">
        <id>Q948J9</id>
        <label>LIP2P</label>
    </interactant>
    <organismsDiffer>false</organismsDiffer>
    <experiments>3</experiments>
</comment>
<comment type="interaction">
    <interactant intactId="EBI-4426649">
        <id>Q17TI5</id>
    </interactant>
    <interactant intactId="EBI-9347308">
        <id>Q1H595</id>
        <label>LSM2</label>
    </interactant>
    <organismsDiffer>false</organismsDiffer>
    <experiments>3</experiments>
</comment>
<comment type="interaction">
    <interactant intactId="EBI-4426649">
        <id>Q17TI5</id>
    </interactant>
    <interactant intactId="EBI-4445335">
        <id>Q5XEN5</id>
        <label>MBD1</label>
    </interactant>
    <organismsDiffer>false</organismsDiffer>
    <experiments>3</experiments>
</comment>
<comment type="interaction">
    <interactant intactId="EBI-4426649">
        <id>Q17TI5</id>
    </interactant>
    <interactant intactId="EBI-2358409">
        <id>O80397</id>
        <label>MKK4</label>
    </interactant>
    <organismsDiffer>false</organismsDiffer>
    <experiments>6</experiments>
</comment>
<comment type="interaction">
    <interactant intactId="EBI-4426649">
        <id>Q17TI5</id>
    </interactant>
    <interactant intactId="EBI-1238534">
        <id>Q9C5C0</id>
        <label>MPK18</label>
    </interactant>
    <organismsDiffer>false</organismsDiffer>
    <experiments>3</experiments>
</comment>
<comment type="interaction">
    <interactant intactId="EBI-4426649">
        <id>Q17TI5</id>
    </interactant>
    <interactant intactId="EBI-2358896">
        <id>Q9SJG9</id>
        <label>MPK20</label>
    </interactant>
    <organismsDiffer>false</organismsDiffer>
    <experiments>5</experiments>
</comment>
<comment type="interaction">
    <interactant intactId="EBI-4426649">
        <id>Q17TI5</id>
    </interactant>
    <interactant intactId="EBI-4428808">
        <id>Q93ZM2</id>
        <label>MWD9.9</label>
    </interactant>
    <organismsDiffer>false</organismsDiffer>
    <experiments>4</experiments>
</comment>
<comment type="interaction">
    <interactant intactId="EBI-4426649">
        <id>Q17TI5</id>
    </interactant>
    <interactant intactId="EBI-15202260">
        <id>Q9SEZ4</id>
        <label>MYB105</label>
    </interactant>
    <organismsDiffer>false</organismsDiffer>
    <experiments>3</experiments>
</comment>
<comment type="interaction">
    <interactant intactId="EBI-4426649">
        <id>Q17TI5</id>
    </interactant>
    <interactant intactId="EBI-1786591">
        <id>Q9S9K9</id>
        <label>MYB3</label>
    </interactant>
    <organismsDiffer>false</organismsDiffer>
    <experiments>3</experiments>
</comment>
<comment type="interaction">
    <interactant intactId="EBI-4426649">
        <id>Q17TI5</id>
    </interactant>
    <interactant intactId="EBI-4442894">
        <id>Q8VYP8</id>
        <label>MYJ24.12</label>
    </interactant>
    <organismsDiffer>false</organismsDiffer>
    <experiments>3</experiments>
</comment>
<comment type="interaction">
    <interactant intactId="EBI-4426649">
        <id>Q17TI5</id>
    </interactant>
    <interactant intactId="EBI-1770573">
        <id>Q9FK59</id>
        <label>NCBP</label>
    </interactant>
    <organismsDiffer>false</organismsDiffer>
    <experiments>3</experiments>
</comment>
<comment type="interaction">
    <interactant intactId="EBI-4426649">
        <id>Q17TI5</id>
    </interactant>
    <interactant intactId="EBI-4427936">
        <id>O82799</id>
        <label>NGA1</label>
    </interactant>
    <organismsDiffer>false</organismsDiffer>
    <experiments>6</experiments>
</comment>
<comment type="interaction">
    <interactant intactId="EBI-4426649">
        <id>Q17TI5</id>
    </interactant>
    <interactant intactId="EBI-4451150">
        <id>P11035</id>
        <label>NIA2</label>
    </interactant>
    <organismsDiffer>false</organismsDiffer>
    <experiments>3</experiments>
</comment>
<comment type="interaction">
    <interactant intactId="EBI-4426649">
        <id>Q17TI5</id>
    </interactant>
    <interactant intactId="EBI-626200">
        <id>Q9SWI1</id>
        <label>PKS1</label>
    </interactant>
    <organismsDiffer>false</organismsDiffer>
    <experiments>3</experiments>
</comment>
<comment type="interaction">
    <interactant intactId="EBI-4426649">
        <id>Q17TI5</id>
    </interactant>
    <interactant intactId="EBI-25512733">
        <id>Q9M9T4</id>
        <label>PKS2</label>
    </interactant>
    <organismsDiffer>false</organismsDiffer>
    <experiments>3</experiments>
</comment>
<comment type="interaction">
    <interactant intactId="EBI-4426649">
        <id>Q17TI5</id>
    </interactant>
    <interactant intactId="EBI-25513821">
        <id>Q9FYE2</id>
        <label>PKS4</label>
    </interactant>
    <organismsDiffer>false</organismsDiffer>
    <experiments>3</experiments>
</comment>
<comment type="interaction">
    <interactant intactId="EBI-4426649">
        <id>Q17TI5</id>
    </interactant>
    <interactant intactId="EBI-1805558">
        <id>Q9S7H1</id>
        <label>psaD1</label>
    </interactant>
    <organismsDiffer>false</organismsDiffer>
    <experiments>3</experiments>
</comment>
<comment type="interaction">
    <interactant intactId="EBI-4426649">
        <id>Q17TI5</id>
    </interactant>
    <interactant intactId="EBI-25516153">
        <id>Q9C8D1</id>
        <label>PUB20</label>
    </interactant>
    <organismsDiffer>false</organismsDiffer>
    <experiments>3</experiments>
</comment>
<comment type="interaction">
    <interactant intactId="EBI-4426649">
        <id>Q17TI5</id>
    </interactant>
    <interactant intactId="EBI-4442587">
        <id>Q058P4</id>
        <label>PUB30</label>
    </interactant>
    <organismsDiffer>false</organismsDiffer>
    <experiments>3</experiments>
</comment>
<comment type="interaction">
    <interactant intactId="EBI-4426649">
        <id>Q17TI5</id>
    </interactant>
    <interactant intactId="EBI-4428791">
        <id>Q852U6</id>
        <label>RHY1A</label>
    </interactant>
    <organismsDiffer>false</organismsDiffer>
    <experiments>4</experiments>
</comment>
<comment type="interaction">
    <interactant intactId="EBI-4426649">
        <id>Q17TI5</id>
    </interactant>
    <interactant intactId="EBI-1238334">
        <id>Q8GY88</id>
        <label>SK2</label>
    </interactant>
    <organismsDiffer>false</organismsDiffer>
    <experiments>3</experiments>
</comment>
<comment type="interaction">
    <interactant intactId="EBI-4426649">
        <id>Q17TI5</id>
    </interactant>
    <interactant intactId="EBI-4424123">
        <id>Q0WT24</id>
        <label>STOP2</label>
    </interactant>
    <organismsDiffer>false</organismsDiffer>
    <experiments>3</experiments>
</comment>
<comment type="interaction">
    <interactant intactId="EBI-4426649">
        <id>Q17TI5</id>
    </interactant>
    <interactant intactId="EBI-4424568">
        <id>Q9LVG2</id>
        <label>TOE2</label>
    </interactant>
    <organismsDiffer>false</organismsDiffer>
    <experiments>4</experiments>
</comment>
<comment type="interaction">
    <interactant intactId="EBI-4426649">
        <id>Q17TI5</id>
    </interactant>
    <interactant intactId="EBI-25517843">
        <id>Q9SZG3</id>
        <label>VQ29</label>
    </interactant>
    <organismsDiffer>false</organismsDiffer>
    <experiments>3</experiments>
</comment>
<comment type="interaction">
    <interactant intactId="EBI-4426649">
        <id>Q17TI5</id>
    </interactant>
    <interactant intactId="EBI-4426718">
        <id>Q0WQX9</id>
        <label>WAVH2</label>
    </interactant>
    <organismsDiffer>false</organismsDiffer>
    <experiments>3</experiments>
</comment>
<comment type="interaction">
    <interactant intactId="EBI-4426649">
        <id>Q17TI5</id>
    </interactant>
    <interactant intactId="EBI-25513081">
        <id>Q93WY4</id>
        <label>WRKY12</label>
    </interactant>
    <organismsDiffer>false</organismsDiffer>
    <experiments>3</experiments>
</comment>
<comment type="interaction">
    <interactant intactId="EBI-4426649">
        <id>Q17TI5</id>
    </interactant>
    <interactant intactId="EBI-2365037">
        <id>Q9SJA8</id>
        <label>WRKY17</label>
    </interactant>
    <organismsDiffer>false</organismsDiffer>
    <experiments>6</experiments>
</comment>
<comment type="interaction">
    <interactant intactId="EBI-4426649">
        <id>Q17TI5</id>
    </interactant>
    <interactant intactId="EBI-15210240">
        <id>Q9CAR4</id>
        <label>WRKY36</label>
    </interactant>
    <organismsDiffer>false</organismsDiffer>
    <experiments>3</experiments>
</comment>
<comment type="interaction">
    <interactant intactId="EBI-4426649">
        <id>Q17TI5</id>
    </interactant>
    <interactant intactId="EBI-25511549">
        <id>Q9FQ04</id>
        <label>XRN4</label>
    </interactant>
    <organismsDiffer>false</organismsDiffer>
    <experiments>3</experiments>
</comment>
<comment type="interaction">
    <interactant intactId="EBI-4426649">
        <id>Q17TI5</id>
    </interactant>
    <interactant intactId="EBI-25518827">
        <id>Q9LTI1</id>
    </interactant>
    <organismsDiffer>false</organismsDiffer>
    <experiments>3</experiments>
</comment>
<comment type="interaction">
    <interactant intactId="EBI-4426649">
        <id>Q17TI5</id>
    </interactant>
    <interactant intactId="EBI-25516773">
        <id>Q9SHJ1</id>
    </interactant>
    <organismsDiffer>false</organismsDiffer>
    <experiments>3</experiments>
</comment>
<comment type="subcellular location">
    <subcellularLocation>
        <location>Nucleus</location>
    </subcellularLocation>
    <subcellularLocation>
        <location evidence="14">Cell membrane</location>
        <topology>Peripheral membrane protein</topology>
        <orientation>Cytoplasmic side</orientation>
    </subcellularLocation>
    <text evidence="14">The translocation to the nucleus depends on the auxin concentration. Polar localization at the plasma membrane, rootward oriented, in developing root protophloem cells (PubMed:28652362).</text>
</comment>
<comment type="tissue specificity">
    <text evidence="5 7 9 10 11 12">Expressed in the developing protophloem up to the elongation zone in root meristem of young seedlings, in the columella and the phloem vasculature throughout the root and in the phloem vasculature in the shoot (PubMed:23569225). Detected in the shoot meristem and in primordia. Low expression in stomata. Confined to sieve element precursor cells and to protophloem (PubMed:25049386).</text>
</comment>
<comment type="developmental stage">
    <text evidence="8 11">Ubiquitously expressed in early embryos and becomes restricted to the vasculature in the mature embryo and at later stages of development (PubMed:19465596). Expressed in roots developing protophloem, up to the end of the transition zone, as well as in the root tip meristem (PubMed:23569225).</text>
</comment>
<comment type="induction">
    <text evidence="5">Up-regulated by auxin and down-regulated by brassinolide.</text>
</comment>
<comment type="domain">
    <text evidence="4">The DZC domain is necessary and sufficient for dimerization. A C-terminal fragment containing both DZC domains is able to rescue the short root phenotype. The N-terminal part (1-57) promotes BRX membrane association and is required for efficient degradation in the nucleus.</text>
</comment>
<comment type="disruption phenotype">
    <text evidence="6 7 9 11 12 13 14">Impaired primary root protophloem differentiation. Short primary root and increased number of lateral roots (PubMed:25049386, PubMed:28652362). Absent sieve element precursor division, occurrence of gap cells lacking actin filament, associated with a reduction in the number of early dividing protophloem cells, in root meristem size and root growth; these phenotypes are partially rescued in plants also missing MAKR5 (PubMed:25049386, PubMed:27354416, PubMed:28652362). Patchy expression of SUC2 (PubMed:25049386). Reduced cotyledon and leaf size. Enhanced response to abscisic acid-mediated inhibition of root growth and insensitivity to cytokinin induced inhibition of lateral root initiation. The double mutant brx ops double mutant has strongly reduced root length and meristem size, with missing protophloem strands (PubMed:28652362). The disruption of BAM3 restores root protophloem and mersitem phenotypes observed in brx mutants (PubMed:23569225). Ectopic overexpression of BAM3 but slightly reduced CLE45 levels in root meristems (PubMed:23569225).</text>
</comment>
<comment type="miscellaneous">
    <text>The truncated variant in cv. Uk-1 results in short root phenotype.</text>
</comment>
<comment type="similarity">
    <text evidence="16">Belongs to the BRX family.</text>
</comment>
<comment type="sequence caution" evidence="16">
    <conflict type="erroneous gene model prediction">
        <sequence resource="EMBL-CDS" id="AAG50720"/>
    </conflict>
</comment>
<keyword id="KW-1003">Cell membrane</keyword>
<keyword id="KW-0217">Developmental protein</keyword>
<keyword id="KW-0221">Differentiation</keyword>
<keyword id="KW-0472">Membrane</keyword>
<keyword id="KW-0539">Nucleus</keyword>
<keyword id="KW-1185">Reference proteome</keyword>
<keyword id="KW-0677">Repeat</keyword>
<reference key="1">
    <citation type="journal article" date="2004" name="Genes Dev.">
        <title>Natural genetic variation in Arabidopsis identifies BREVIS RADIX, a novel regulator of cell proliferation and elongation in the root.</title>
        <authorList>
            <person name="Mouchel C.F."/>
            <person name="Briggs G.C."/>
            <person name="Hardtke C.S."/>
        </authorList>
    </citation>
    <scope>NUCLEOTIDE SEQUENCE [MRNA]</scope>
    <scope>FUNCTION</scope>
    <scope>SUBCELLULAR LOCATION</scope>
    <source>
        <strain>cv. Uk-1</strain>
        <strain>cv. Uk-2</strain>
    </source>
</reference>
<reference key="2">
    <citation type="journal article" date="2000" name="Nature">
        <title>Sequence and analysis of chromosome 1 of the plant Arabidopsis thaliana.</title>
        <authorList>
            <person name="Theologis A."/>
            <person name="Ecker J.R."/>
            <person name="Palm C.J."/>
            <person name="Federspiel N.A."/>
            <person name="Kaul S."/>
            <person name="White O."/>
            <person name="Alonso J."/>
            <person name="Altafi H."/>
            <person name="Araujo R."/>
            <person name="Bowman C.L."/>
            <person name="Brooks S.Y."/>
            <person name="Buehler E."/>
            <person name="Chan A."/>
            <person name="Chao Q."/>
            <person name="Chen H."/>
            <person name="Cheuk R.F."/>
            <person name="Chin C.W."/>
            <person name="Chung M.K."/>
            <person name="Conn L."/>
            <person name="Conway A.B."/>
            <person name="Conway A.R."/>
            <person name="Creasy T.H."/>
            <person name="Dewar K."/>
            <person name="Dunn P."/>
            <person name="Etgu P."/>
            <person name="Feldblyum T.V."/>
            <person name="Feng J.-D."/>
            <person name="Fong B."/>
            <person name="Fujii C.Y."/>
            <person name="Gill J.E."/>
            <person name="Goldsmith A.D."/>
            <person name="Haas B."/>
            <person name="Hansen N.F."/>
            <person name="Hughes B."/>
            <person name="Huizar L."/>
            <person name="Hunter J.L."/>
            <person name="Jenkins J."/>
            <person name="Johnson-Hopson C."/>
            <person name="Khan S."/>
            <person name="Khaykin E."/>
            <person name="Kim C.J."/>
            <person name="Koo H.L."/>
            <person name="Kremenetskaia I."/>
            <person name="Kurtz D.B."/>
            <person name="Kwan A."/>
            <person name="Lam B."/>
            <person name="Langin-Hooper S."/>
            <person name="Lee A."/>
            <person name="Lee J.M."/>
            <person name="Lenz C.A."/>
            <person name="Li J.H."/>
            <person name="Li Y.-P."/>
            <person name="Lin X."/>
            <person name="Liu S.X."/>
            <person name="Liu Z.A."/>
            <person name="Luros J.S."/>
            <person name="Maiti R."/>
            <person name="Marziali A."/>
            <person name="Militscher J."/>
            <person name="Miranda M."/>
            <person name="Nguyen M."/>
            <person name="Nierman W.C."/>
            <person name="Osborne B.I."/>
            <person name="Pai G."/>
            <person name="Peterson J."/>
            <person name="Pham P.K."/>
            <person name="Rizzo M."/>
            <person name="Rooney T."/>
            <person name="Rowley D."/>
            <person name="Sakano H."/>
            <person name="Salzberg S.L."/>
            <person name="Schwartz J.R."/>
            <person name="Shinn P."/>
            <person name="Southwick A.M."/>
            <person name="Sun H."/>
            <person name="Tallon L.J."/>
            <person name="Tambunga G."/>
            <person name="Toriumi M.J."/>
            <person name="Town C.D."/>
            <person name="Utterback T."/>
            <person name="Van Aken S."/>
            <person name="Vaysberg M."/>
            <person name="Vysotskaia V.S."/>
            <person name="Walker M."/>
            <person name="Wu D."/>
            <person name="Yu G."/>
            <person name="Fraser C.M."/>
            <person name="Venter J.C."/>
            <person name="Davis R.W."/>
        </authorList>
    </citation>
    <scope>NUCLEOTIDE SEQUENCE [LARGE SCALE GENOMIC DNA]</scope>
    <source>
        <strain>cv. Columbia</strain>
    </source>
</reference>
<reference key="3">
    <citation type="journal article" date="2017" name="Plant J.">
        <title>Araport11: a complete reannotation of the Arabidopsis thaliana reference genome.</title>
        <authorList>
            <person name="Cheng C.Y."/>
            <person name="Krishnakumar V."/>
            <person name="Chan A.P."/>
            <person name="Thibaud-Nissen F."/>
            <person name="Schobel S."/>
            <person name="Town C.D."/>
        </authorList>
    </citation>
    <scope>GENOME REANNOTATION</scope>
    <source>
        <strain>cv. Columbia</strain>
    </source>
</reference>
<reference key="4">
    <citation type="journal article" date="2003" name="Science">
        <title>Empirical analysis of transcriptional activity in the Arabidopsis genome.</title>
        <authorList>
            <person name="Yamada K."/>
            <person name="Lim J."/>
            <person name="Dale J.M."/>
            <person name="Chen H."/>
            <person name="Shinn P."/>
            <person name="Palm C.J."/>
            <person name="Southwick A.M."/>
            <person name="Wu H.C."/>
            <person name="Kim C.J."/>
            <person name="Nguyen M."/>
            <person name="Pham P.K."/>
            <person name="Cheuk R.F."/>
            <person name="Karlin-Newmann G."/>
            <person name="Liu S.X."/>
            <person name="Lam B."/>
            <person name="Sakano H."/>
            <person name="Wu T."/>
            <person name="Yu G."/>
            <person name="Miranda M."/>
            <person name="Quach H.L."/>
            <person name="Tripp M."/>
            <person name="Chang C.H."/>
            <person name="Lee J.M."/>
            <person name="Toriumi M.J."/>
            <person name="Chan M.M."/>
            <person name="Tang C.C."/>
            <person name="Onodera C.S."/>
            <person name="Deng J.M."/>
            <person name="Akiyama K."/>
            <person name="Ansari Y."/>
            <person name="Arakawa T."/>
            <person name="Banh J."/>
            <person name="Banno F."/>
            <person name="Bowser L."/>
            <person name="Brooks S.Y."/>
            <person name="Carninci P."/>
            <person name="Chao Q."/>
            <person name="Choy N."/>
            <person name="Enju A."/>
            <person name="Goldsmith A.D."/>
            <person name="Gurjal M."/>
            <person name="Hansen N.F."/>
            <person name="Hayashizaki Y."/>
            <person name="Johnson-Hopson C."/>
            <person name="Hsuan V.W."/>
            <person name="Iida K."/>
            <person name="Karnes M."/>
            <person name="Khan S."/>
            <person name="Koesema E."/>
            <person name="Ishida J."/>
            <person name="Jiang P.X."/>
            <person name="Jones T."/>
            <person name="Kawai J."/>
            <person name="Kamiya A."/>
            <person name="Meyers C."/>
            <person name="Nakajima M."/>
            <person name="Narusaka M."/>
            <person name="Seki M."/>
            <person name="Sakurai T."/>
            <person name="Satou M."/>
            <person name="Tamse R."/>
            <person name="Vaysberg M."/>
            <person name="Wallender E.K."/>
            <person name="Wong C."/>
            <person name="Yamamura Y."/>
            <person name="Yuan S."/>
            <person name="Shinozaki K."/>
            <person name="Davis R.W."/>
            <person name="Theologis A."/>
            <person name="Ecker J.R."/>
        </authorList>
    </citation>
    <scope>NUCLEOTIDE SEQUENCE [LARGE SCALE MRNA]</scope>
    <source>
        <strain>cv. Columbia</strain>
    </source>
</reference>
<reference key="5">
    <citation type="journal article" date="2006" name="Nature">
        <title>BRX mediates feedback between brassinosteroid levels and auxin signalling in root growth.</title>
        <authorList>
            <person name="Mouchel C.F."/>
            <person name="Osmont K.S."/>
            <person name="Hardtke C.S."/>
        </authorList>
    </citation>
    <scope>TISSUE SPECIFICITY</scope>
    <scope>INDUCTION BY AUXIN AND BRASSINOLIDE</scope>
</reference>
<reference key="6">
    <citation type="journal article" date="2006" name="Plant Physiol.">
        <title>Characterization of the plant-specific BREVIS RADIX gene family reveals limited genetic redundancy despite high sequence conservation.</title>
        <authorList>
            <person name="Briggs G.C."/>
            <person name="Mouchel C.F."/>
            <person name="Hardtke C.S."/>
        </authorList>
    </citation>
    <scope>GENE FAMILY</scope>
    <scope>DOMAIN</scope>
    <scope>SUBUNIT</scope>
</reference>
<reference key="7">
    <citation type="journal article" date="2009" name="Development">
        <title>Dynamic, auxin-responsive plasma membrane-to-nucleus movement of Arabidopsis BRX.</title>
        <authorList>
            <person name="Scacchi E."/>
            <person name="Osmont K.S."/>
            <person name="Beuchat J."/>
            <person name="Salinas P."/>
            <person name="Navarrete-Gomez M."/>
            <person name="Trigueros M."/>
            <person name="Ferrandiz C."/>
            <person name="Hardtke C.S."/>
        </authorList>
    </citation>
    <scope>FUNCTION</scope>
    <scope>SUBCELLULAR LOCATION</scope>
    <scope>DEVELOPMENTAL STAGE</scope>
    <scope>INTERACTION WITH NGA1</scope>
</reference>
<reference key="8">
    <citation type="journal article" date="2009" name="Planta">
        <title>BREVIS RADIX is involved in cytokinin-mediated inhibition of lateral root initiation in Arabidopsis.</title>
        <authorList>
            <person name="Li J."/>
            <person name="Mo X."/>
            <person name="Wang J."/>
            <person name="Chen N."/>
            <person name="Fan H."/>
            <person name="Dai C."/>
            <person name="Wu P."/>
        </authorList>
    </citation>
    <scope>DISRUPTION PHENOTYPE</scope>
</reference>
<reference key="9">
    <citation type="journal article" date="2009" name="Plant Physiol.">
        <title>The short-rooted phenotype of the brevis radix mutant partly reflects root abscisic acid hypersensitivity.</title>
        <authorList>
            <person name="Rodrigues A."/>
            <person name="Santiago J."/>
            <person name="Rubio S."/>
            <person name="Saez A."/>
            <person name="Osmont K.S."/>
            <person name="Gadea J."/>
            <person name="Hardtke C.S."/>
            <person name="Rodriguez P.L."/>
        </authorList>
    </citation>
    <scope>FUNCTION</scope>
    <scope>DISRUPTION PHENOTYPE</scope>
    <scope>TISSUE SPECIFICITY</scope>
</reference>
<reference key="10">
    <citation type="journal article" date="2010" name="New Phytol.">
        <title>BRX promotes Arabidopsis shoot growth.</title>
        <authorList>
            <person name="Beuchat J."/>
            <person name="Scacchi E."/>
            <person name="Tarkowska D."/>
            <person name="Ragni L."/>
            <person name="Strnad M."/>
            <person name="Hardtke C.S."/>
        </authorList>
    </citation>
    <scope>FUNCTION</scope>
    <scope>TISSUE SPECIFICITY</scope>
    <scope>DISRUPTION PHENOTYPE</scope>
</reference>
<reference key="11">
    <citation type="journal article" date="2010" name="Proc. Natl. Acad. Sci. U.S.A.">
        <title>Spatio-temporal sequence of cross-regulatory events in root meristem growth.</title>
        <authorList>
            <person name="Scacchi E."/>
            <person name="Salinas P."/>
            <person name="Gujas B."/>
            <person name="Santuari L."/>
            <person name="Krogan N."/>
            <person name="Ragni L."/>
            <person name="Berleth T."/>
            <person name="Hardtke C.S."/>
        </authorList>
    </citation>
    <scope>FUNCTION</scope>
    <scope>TISSUE SPECIFICITY</scope>
    <scope>INTERACTION WITH ARF5</scope>
</reference>
<reference key="12">
    <citation type="journal article" date="2013" name="Proc. Natl. Acad. Sci. U.S.A.">
        <title>Suppression of Arabidopsis protophloem differentiation and root meristem growth by CLE45 requires the receptor-like kinase BAM3.</title>
        <authorList>
            <person name="Depuydt S."/>
            <person name="Rodriguez-Villalon A."/>
            <person name="Santuari L."/>
            <person name="Wyser-Rmili C."/>
            <person name="Ragni L."/>
            <person name="Hardtke C.S."/>
        </authorList>
    </citation>
    <scope>FUNCTION</scope>
    <scope>DISRUPTION PHENOTYPE</scope>
    <scope>DEVELOPMENTAL STAGE</scope>
    <scope>TISSUE SPECIFICITY</scope>
    <source>
        <strain>cv. Columbia</strain>
    </source>
</reference>
<reference key="13">
    <citation type="journal article" date="2014" name="Proc. Natl. Acad. Sci. U.S.A.">
        <title>Molecular genetic framework for protophloem formation.</title>
        <authorList>
            <person name="Rodriguez-Villalon A."/>
            <person name="Gujas B."/>
            <person name="Kang Y.H."/>
            <person name="Breda A.S."/>
            <person name="Cattaneo P."/>
            <person name="Depuydt S."/>
            <person name="Hardtke C.S."/>
        </authorList>
    </citation>
    <scope>FUNCTION</scope>
    <scope>DISRUPTION PHENOTYPE</scope>
    <scope>TISSUE SPECIFICITY</scope>
    <source>
        <strain>cv. Columbia</strain>
    </source>
</reference>
<reference key="14">
    <citation type="journal article" date="2016" name="EMBO Rep.">
        <title>Arabidopsis MAKR5 is a positive effector of BAM3-dependent CLE45 signaling.</title>
        <authorList>
            <person name="Kang Y.H."/>
            <person name="Hardtke C.S."/>
        </authorList>
    </citation>
    <scope>DISRUPTION PHENOTYPE</scope>
    <source>
        <strain>cv. Columbia</strain>
    </source>
</reference>
<reference key="15">
    <citation type="journal article" date="2017" name="Proc. Natl. Acad. Sci. U.S.A.">
        <title>Phosphosite charge rather than shootward localization determines OCTOPUS activity in root protophloem.</title>
        <authorList>
            <person name="Breda A.S."/>
            <person name="Hazak O."/>
            <person name="Hardtke C.S."/>
        </authorList>
    </citation>
    <scope>FUNCTION</scope>
    <scope>DISRUPTION PHENOTYPE</scope>
    <scope>SUBCELLULAR LOCATION</scope>
    <source>
        <strain>cv. Columbia</strain>
    </source>
</reference>
<gene>
    <name evidence="15" type="primary">BRX</name>
    <name evidence="17" type="ordered locus">At1g31880</name>
    <name evidence="18" type="ORF">F5M6.11</name>
</gene>
<sequence length="344" mass="38761">MFSCIACTKADGGEEVEHGARGGTTPNTKEAVKSLTIQIKDMALKFSGAYKQCKPCTGSSSSPLKKGHRSFPDYDNASEGVPYPFMGGSAGSTPAWDFTNSSHHPAGRLESKFTSIYGNDRESISAQSCDVVLDDDGPKEWMAQVEPGVHITFASLPTGGNDLKRIRFSREMFDKWQAQRWWGENYDKIVELYNVQRFNRQALQTPARSDDQSQRDSTYSKMDSARESKDWTPRHNFRPPGSVPHHFYGGSSNYGPGSYHGGPPMDAARTTTSSRDDPPSMSNASEMQAEWIEEDEPGVYITIRQLSDGTRELRRVRFSRERFGEVHAKTWWEQNRERIQTQYL</sequence>
<accession>Q17TI5</accession>
<accession>Q17TI6</accession>
<accession>Q84JB6</accession>
<accession>Q9C6S9</accession>
<dbReference type="EMBL" id="AY702648">
    <property type="protein sequence ID" value="ABG25052.1"/>
    <property type="molecule type" value="mRNA"/>
</dbReference>
<dbReference type="EMBL" id="AY702649">
    <property type="protein sequence ID" value="ABG25053.1"/>
    <property type="molecule type" value="mRNA"/>
</dbReference>
<dbReference type="EMBL" id="AC079041">
    <property type="protein sequence ID" value="AAG50720.1"/>
    <property type="status" value="ALT_SEQ"/>
    <property type="molecule type" value="Genomic_DNA"/>
</dbReference>
<dbReference type="EMBL" id="CP002684">
    <property type="protein sequence ID" value="AEE31412.1"/>
    <property type="molecule type" value="Genomic_DNA"/>
</dbReference>
<dbReference type="EMBL" id="BT002854">
    <property type="protein sequence ID" value="AAO22671.1"/>
    <property type="molecule type" value="mRNA"/>
</dbReference>
<dbReference type="EMBL" id="BT004390">
    <property type="protein sequence ID" value="AAO42384.1"/>
    <property type="molecule type" value="mRNA"/>
</dbReference>
<dbReference type="PIR" id="A86443">
    <property type="entry name" value="A86443"/>
</dbReference>
<dbReference type="RefSeq" id="NP_174471.2">
    <property type="nucleotide sequence ID" value="NM_102925.3"/>
</dbReference>
<dbReference type="SMR" id="Q17TI5"/>
<dbReference type="BioGRID" id="25312">
    <property type="interactions" value="96"/>
</dbReference>
<dbReference type="FunCoup" id="Q17TI5">
    <property type="interactions" value="331"/>
</dbReference>
<dbReference type="IntAct" id="Q17TI5">
    <property type="interactions" value="94"/>
</dbReference>
<dbReference type="STRING" id="3702.Q17TI5"/>
<dbReference type="GlyGen" id="Q17TI5">
    <property type="glycosylation" value="1 site"/>
</dbReference>
<dbReference type="PaxDb" id="3702-AT1G31880.1"/>
<dbReference type="ProteomicsDB" id="240364"/>
<dbReference type="EnsemblPlants" id="AT1G31880.1">
    <property type="protein sequence ID" value="AT1G31880.1"/>
    <property type="gene ID" value="AT1G31880"/>
</dbReference>
<dbReference type="GeneID" id="840078"/>
<dbReference type="Gramene" id="AT1G31880.1">
    <property type="protein sequence ID" value="AT1G31880.1"/>
    <property type="gene ID" value="AT1G31880"/>
</dbReference>
<dbReference type="KEGG" id="ath:AT1G31880"/>
<dbReference type="Araport" id="AT1G31880"/>
<dbReference type="TAIR" id="AT1G31880">
    <property type="gene designation" value="BRX"/>
</dbReference>
<dbReference type="eggNOG" id="ENOG502QU4N">
    <property type="taxonomic scope" value="Eukaryota"/>
</dbReference>
<dbReference type="HOGENOM" id="CLU_033380_0_1_1"/>
<dbReference type="InParanoid" id="Q17TI5"/>
<dbReference type="OrthoDB" id="10250282at2759"/>
<dbReference type="PhylomeDB" id="Q17TI5"/>
<dbReference type="PRO" id="PR:Q17TI5"/>
<dbReference type="Proteomes" id="UP000006548">
    <property type="component" value="Chromosome 1"/>
</dbReference>
<dbReference type="ExpressionAtlas" id="Q17TI5">
    <property type="expression patterns" value="baseline and differential"/>
</dbReference>
<dbReference type="GO" id="GO:0005634">
    <property type="term" value="C:nucleus"/>
    <property type="evidence" value="ECO:0000314"/>
    <property type="project" value="TAIR"/>
</dbReference>
<dbReference type="GO" id="GO:0005886">
    <property type="term" value="C:plasma membrane"/>
    <property type="evidence" value="ECO:0007669"/>
    <property type="project" value="UniProtKB-SubCell"/>
</dbReference>
<dbReference type="GO" id="GO:0042802">
    <property type="term" value="F:identical protein binding"/>
    <property type="evidence" value="ECO:0000353"/>
    <property type="project" value="TAIR"/>
</dbReference>
<dbReference type="GO" id="GO:0010315">
    <property type="term" value="P:auxin export across the plasma membrane"/>
    <property type="evidence" value="ECO:0000314"/>
    <property type="project" value="TAIR"/>
</dbReference>
<dbReference type="GO" id="GO:0009734">
    <property type="term" value="P:auxin-activated signaling pathway"/>
    <property type="evidence" value="ECO:0000315"/>
    <property type="project" value="TAIR"/>
</dbReference>
<dbReference type="GO" id="GO:0030154">
    <property type="term" value="P:cell differentiation"/>
    <property type="evidence" value="ECO:0000315"/>
    <property type="project" value="UniProtKB"/>
</dbReference>
<dbReference type="GO" id="GO:0009736">
    <property type="term" value="P:cytokinin-activated signaling pathway"/>
    <property type="evidence" value="ECO:0000315"/>
    <property type="project" value="TAIR"/>
</dbReference>
<dbReference type="GO" id="GO:0048527">
    <property type="term" value="P:lateral root development"/>
    <property type="evidence" value="ECO:0000315"/>
    <property type="project" value="TAIR"/>
</dbReference>
<dbReference type="GO" id="GO:0010078">
    <property type="term" value="P:maintenance of root meristem identity"/>
    <property type="evidence" value="ECO:0000315"/>
    <property type="project" value="UniProtKB"/>
</dbReference>
<dbReference type="GO" id="GO:0010088">
    <property type="term" value="P:phloem development"/>
    <property type="evidence" value="ECO:0000315"/>
    <property type="project" value="UniProtKB"/>
</dbReference>
<dbReference type="GO" id="GO:2000280">
    <property type="term" value="P:regulation of root development"/>
    <property type="evidence" value="ECO:0000315"/>
    <property type="project" value="UniProtKB"/>
</dbReference>
<dbReference type="GO" id="GO:0009737">
    <property type="term" value="P:response to abscisic acid"/>
    <property type="evidence" value="ECO:0000315"/>
    <property type="project" value="TAIR"/>
</dbReference>
<dbReference type="GO" id="GO:0048364">
    <property type="term" value="P:root development"/>
    <property type="evidence" value="ECO:0000315"/>
    <property type="project" value="TAIR"/>
</dbReference>
<dbReference type="GO" id="GO:0048756">
    <property type="term" value="P:sieve cell differentiation"/>
    <property type="evidence" value="ECO:0000315"/>
    <property type="project" value="TAIR"/>
</dbReference>
<dbReference type="InterPro" id="IPR013591">
    <property type="entry name" value="Brevis_radix_dom"/>
</dbReference>
<dbReference type="InterPro" id="IPR044532">
    <property type="entry name" value="BRX-like"/>
</dbReference>
<dbReference type="InterPro" id="IPR027988">
    <property type="entry name" value="BRX_N"/>
</dbReference>
<dbReference type="PANTHER" id="PTHR46058:SF38">
    <property type="entry name" value="BREVIS RADIX-LIKE PROTEIN-RELATED"/>
    <property type="match status" value="1"/>
</dbReference>
<dbReference type="PANTHER" id="PTHR46058">
    <property type="entry name" value="PROTEIN BREVIS RADIX-LIKE 1"/>
    <property type="match status" value="1"/>
</dbReference>
<dbReference type="Pfam" id="PF08381">
    <property type="entry name" value="BRX"/>
    <property type="match status" value="2"/>
</dbReference>
<dbReference type="Pfam" id="PF13713">
    <property type="entry name" value="BRX_N"/>
    <property type="match status" value="1"/>
</dbReference>
<dbReference type="PROSITE" id="PS51514">
    <property type="entry name" value="BRX"/>
    <property type="match status" value="2"/>
</dbReference>
<organism>
    <name type="scientific">Arabidopsis thaliana</name>
    <name type="common">Mouse-ear cress</name>
    <dbReference type="NCBI Taxonomy" id="3702"/>
    <lineage>
        <taxon>Eukaryota</taxon>
        <taxon>Viridiplantae</taxon>
        <taxon>Streptophyta</taxon>
        <taxon>Embryophyta</taxon>
        <taxon>Tracheophyta</taxon>
        <taxon>Spermatophyta</taxon>
        <taxon>Magnoliopsida</taxon>
        <taxon>eudicotyledons</taxon>
        <taxon>Gunneridae</taxon>
        <taxon>Pentapetalae</taxon>
        <taxon>rosids</taxon>
        <taxon>malvids</taxon>
        <taxon>Brassicales</taxon>
        <taxon>Brassicaceae</taxon>
        <taxon>Camelineae</taxon>
        <taxon>Arabidopsis</taxon>
    </lineage>
</organism>
<evidence type="ECO:0000255" key="1">
    <source>
        <dbReference type="PROSITE-ProRule" id="PRU00847"/>
    </source>
</evidence>
<evidence type="ECO:0000256" key="2">
    <source>
        <dbReference type="SAM" id="MobiDB-lite"/>
    </source>
</evidence>
<evidence type="ECO:0000269" key="3">
    <source>
    </source>
</evidence>
<evidence type="ECO:0000269" key="4">
    <source>
    </source>
</evidence>
<evidence type="ECO:0000269" key="5">
    <source>
    </source>
</evidence>
<evidence type="ECO:0000269" key="6">
    <source>
    </source>
</evidence>
<evidence type="ECO:0000269" key="7">
    <source>
    </source>
</evidence>
<evidence type="ECO:0000269" key="8">
    <source>
    </source>
</evidence>
<evidence type="ECO:0000269" key="9">
    <source>
    </source>
</evidence>
<evidence type="ECO:0000269" key="10">
    <source>
    </source>
</evidence>
<evidence type="ECO:0000269" key="11">
    <source>
    </source>
</evidence>
<evidence type="ECO:0000269" key="12">
    <source>
    </source>
</evidence>
<evidence type="ECO:0000269" key="13">
    <source>
    </source>
</evidence>
<evidence type="ECO:0000269" key="14">
    <source>
    </source>
</evidence>
<evidence type="ECO:0000303" key="15">
    <source>
    </source>
</evidence>
<evidence type="ECO:0000305" key="16"/>
<evidence type="ECO:0000312" key="17">
    <source>
        <dbReference type="Araport" id="AT1G31880"/>
    </source>
</evidence>
<evidence type="ECO:0000312" key="18">
    <source>
        <dbReference type="EMBL" id="AAG50720.1"/>
    </source>
</evidence>
<feature type="chain" id="PRO_0000373821" description="Protein BREVIS RADIX">
    <location>
        <begin position="1"/>
        <end position="344"/>
    </location>
</feature>
<feature type="domain" description="BRX 1" evidence="1">
    <location>
        <begin position="139"/>
        <end position="194"/>
    </location>
</feature>
<feature type="domain" description="BRX 2" evidence="1">
    <location>
        <begin position="289"/>
        <end position="344"/>
    </location>
</feature>
<feature type="region of interest" description="Disordered" evidence="2">
    <location>
        <begin position="203"/>
        <end position="286"/>
    </location>
</feature>
<feature type="compositionally biased region" description="Basic and acidic residues" evidence="2">
    <location>
        <begin position="223"/>
        <end position="233"/>
    </location>
</feature>
<feature type="compositionally biased region" description="Low complexity" evidence="2">
    <location>
        <begin position="248"/>
        <end position="264"/>
    </location>
</feature>
<feature type="sequence variant" description="In strain: cv. Uk-1.">
    <location>
        <begin position="141"/>
        <end position="344"/>
    </location>
</feature>
<feature type="sequence variant" description="In strain: cv. Uk-2.">
    <original>T</original>
    <variation>S</variation>
    <location>
        <position position="310"/>
    </location>
</feature>
<name>BRX_ARATH</name>
<proteinExistence type="evidence at protein level"/>
<protein>
    <recommendedName>
        <fullName evidence="15">Protein BREVIS RADIX</fullName>
        <shortName evidence="15">AtBRX</shortName>
    </recommendedName>
</protein>